<feature type="chain" id="PRO_0000081573" description="RNA-binding protein 45">
    <location>
        <begin position="1"/>
        <end position="476"/>
    </location>
</feature>
<feature type="domain" description="RRM 1" evidence="4">
    <location>
        <begin position="26"/>
        <end position="106"/>
    </location>
</feature>
<feature type="domain" description="RRM 2" evidence="4">
    <location>
        <begin position="121"/>
        <end position="192"/>
    </location>
</feature>
<feature type="domain" description="RRM 3" evidence="4">
    <location>
        <begin position="392"/>
        <end position="464"/>
    </location>
</feature>
<feature type="region of interest" description="Disordered" evidence="5">
    <location>
        <begin position="1"/>
        <end position="20"/>
    </location>
</feature>
<feature type="region of interest" description="Disordered" evidence="5">
    <location>
        <begin position="192"/>
        <end position="212"/>
    </location>
</feature>
<feature type="compositionally biased region" description="Gly residues" evidence="5">
    <location>
        <begin position="1"/>
        <end position="14"/>
    </location>
</feature>
<feature type="compositionally biased region" description="Polar residues" evidence="5">
    <location>
        <begin position="196"/>
        <end position="209"/>
    </location>
</feature>
<feature type="modified residue" description="Phosphoserine" evidence="10">
    <location>
        <position position="199"/>
    </location>
</feature>
<feature type="modified residue" description="Phosphoserine" evidence="3">
    <location>
        <position position="464"/>
    </location>
</feature>
<feature type="cross-link" description="Glycyl lysine isopeptide (Lys-Gly) (interchain with G-Cter in SUMO2)" evidence="3">
    <location>
        <position position="34"/>
    </location>
</feature>
<feature type="sequence conflict" description="In Ref. 3; BAC41024." evidence="6" ref="3">
    <original>T</original>
    <variation>S</variation>
    <location>
        <position position="121"/>
    </location>
</feature>
<feature type="sequence conflict" description="In Ref. 3; BAC41024." evidence="6" ref="3">
    <original>E</original>
    <variation>K</variation>
    <location>
        <position position="277"/>
    </location>
</feature>
<gene>
    <name type="primary">Rbm45</name>
    <name evidence="9" type="synonym">Drb1</name>
    <name type="synonym">Drbp1</name>
</gene>
<reference evidence="9" key="1">
    <citation type="journal article" date="2002" name="Biochem. Biophys. Res. Commun.">
        <title>cDNA cloning and characterization of Drb1, a new member of RRM-type neural RNA-binding protein.</title>
        <authorList>
            <person name="Tamada H."/>
            <person name="Sakashita E."/>
            <person name="Shimazaki K."/>
            <person name="Ueno E."/>
            <person name="Hamamoto T."/>
            <person name="Kagawa Y."/>
            <person name="Endo H."/>
        </authorList>
    </citation>
    <scope>NUCLEOTIDE SEQUENCE [MRNA]</scope>
    <source>
        <strain evidence="9">BALB/cJ</strain>
        <tissue evidence="9">Brain</tissue>
    </source>
</reference>
<reference evidence="8" key="2">
    <citation type="submission" date="2002-09" db="EMBL/GenBank/DDBJ databases">
        <authorList>
            <person name="Chen X.G."/>
            <person name="Li Y."/>
        </authorList>
    </citation>
    <scope>NUCLEOTIDE SEQUENCE [MRNA]</scope>
    <source>
        <strain evidence="8">BALB/cJ</strain>
        <tissue evidence="8">Embryonic heart</tissue>
    </source>
</reference>
<reference key="3">
    <citation type="journal article" date="2005" name="Science">
        <title>The transcriptional landscape of the mammalian genome.</title>
        <authorList>
            <person name="Carninci P."/>
            <person name="Kasukawa T."/>
            <person name="Katayama S."/>
            <person name="Gough J."/>
            <person name="Frith M.C."/>
            <person name="Maeda N."/>
            <person name="Oyama R."/>
            <person name="Ravasi T."/>
            <person name="Lenhard B."/>
            <person name="Wells C."/>
            <person name="Kodzius R."/>
            <person name="Shimokawa K."/>
            <person name="Bajic V.B."/>
            <person name="Brenner S.E."/>
            <person name="Batalov S."/>
            <person name="Forrest A.R."/>
            <person name="Zavolan M."/>
            <person name="Davis M.J."/>
            <person name="Wilming L.G."/>
            <person name="Aidinis V."/>
            <person name="Allen J.E."/>
            <person name="Ambesi-Impiombato A."/>
            <person name="Apweiler R."/>
            <person name="Aturaliya R.N."/>
            <person name="Bailey T.L."/>
            <person name="Bansal M."/>
            <person name="Baxter L."/>
            <person name="Beisel K.W."/>
            <person name="Bersano T."/>
            <person name="Bono H."/>
            <person name="Chalk A.M."/>
            <person name="Chiu K.P."/>
            <person name="Choudhary V."/>
            <person name="Christoffels A."/>
            <person name="Clutterbuck D.R."/>
            <person name="Crowe M.L."/>
            <person name="Dalla E."/>
            <person name="Dalrymple B.P."/>
            <person name="de Bono B."/>
            <person name="Della Gatta G."/>
            <person name="di Bernardo D."/>
            <person name="Down T."/>
            <person name="Engstrom P."/>
            <person name="Fagiolini M."/>
            <person name="Faulkner G."/>
            <person name="Fletcher C.F."/>
            <person name="Fukushima T."/>
            <person name="Furuno M."/>
            <person name="Futaki S."/>
            <person name="Gariboldi M."/>
            <person name="Georgii-Hemming P."/>
            <person name="Gingeras T.R."/>
            <person name="Gojobori T."/>
            <person name="Green R.E."/>
            <person name="Gustincich S."/>
            <person name="Harbers M."/>
            <person name="Hayashi Y."/>
            <person name="Hensch T.K."/>
            <person name="Hirokawa N."/>
            <person name="Hill D."/>
            <person name="Huminiecki L."/>
            <person name="Iacono M."/>
            <person name="Ikeo K."/>
            <person name="Iwama A."/>
            <person name="Ishikawa T."/>
            <person name="Jakt M."/>
            <person name="Kanapin A."/>
            <person name="Katoh M."/>
            <person name="Kawasawa Y."/>
            <person name="Kelso J."/>
            <person name="Kitamura H."/>
            <person name="Kitano H."/>
            <person name="Kollias G."/>
            <person name="Krishnan S.P."/>
            <person name="Kruger A."/>
            <person name="Kummerfeld S.K."/>
            <person name="Kurochkin I.V."/>
            <person name="Lareau L.F."/>
            <person name="Lazarevic D."/>
            <person name="Lipovich L."/>
            <person name="Liu J."/>
            <person name="Liuni S."/>
            <person name="McWilliam S."/>
            <person name="Madan Babu M."/>
            <person name="Madera M."/>
            <person name="Marchionni L."/>
            <person name="Matsuda H."/>
            <person name="Matsuzawa S."/>
            <person name="Miki H."/>
            <person name="Mignone F."/>
            <person name="Miyake S."/>
            <person name="Morris K."/>
            <person name="Mottagui-Tabar S."/>
            <person name="Mulder N."/>
            <person name="Nakano N."/>
            <person name="Nakauchi H."/>
            <person name="Ng P."/>
            <person name="Nilsson R."/>
            <person name="Nishiguchi S."/>
            <person name="Nishikawa S."/>
            <person name="Nori F."/>
            <person name="Ohara O."/>
            <person name="Okazaki Y."/>
            <person name="Orlando V."/>
            <person name="Pang K.C."/>
            <person name="Pavan W.J."/>
            <person name="Pavesi G."/>
            <person name="Pesole G."/>
            <person name="Petrovsky N."/>
            <person name="Piazza S."/>
            <person name="Reed J."/>
            <person name="Reid J.F."/>
            <person name="Ring B.Z."/>
            <person name="Ringwald M."/>
            <person name="Rost B."/>
            <person name="Ruan Y."/>
            <person name="Salzberg S.L."/>
            <person name="Sandelin A."/>
            <person name="Schneider C."/>
            <person name="Schoenbach C."/>
            <person name="Sekiguchi K."/>
            <person name="Semple C.A."/>
            <person name="Seno S."/>
            <person name="Sessa L."/>
            <person name="Sheng Y."/>
            <person name="Shibata Y."/>
            <person name="Shimada H."/>
            <person name="Shimada K."/>
            <person name="Silva D."/>
            <person name="Sinclair B."/>
            <person name="Sperling S."/>
            <person name="Stupka E."/>
            <person name="Sugiura K."/>
            <person name="Sultana R."/>
            <person name="Takenaka Y."/>
            <person name="Taki K."/>
            <person name="Tammoja K."/>
            <person name="Tan S.L."/>
            <person name="Tang S."/>
            <person name="Taylor M.S."/>
            <person name="Tegner J."/>
            <person name="Teichmann S.A."/>
            <person name="Ueda H.R."/>
            <person name="van Nimwegen E."/>
            <person name="Verardo R."/>
            <person name="Wei C.L."/>
            <person name="Yagi K."/>
            <person name="Yamanishi H."/>
            <person name="Zabarovsky E."/>
            <person name="Zhu S."/>
            <person name="Zimmer A."/>
            <person name="Hide W."/>
            <person name="Bult C."/>
            <person name="Grimmond S.M."/>
            <person name="Teasdale R.D."/>
            <person name="Liu E.T."/>
            <person name="Brusic V."/>
            <person name="Quackenbush J."/>
            <person name="Wahlestedt C."/>
            <person name="Mattick J.S."/>
            <person name="Hume D.A."/>
            <person name="Kai C."/>
            <person name="Sasaki D."/>
            <person name="Tomaru Y."/>
            <person name="Fukuda S."/>
            <person name="Kanamori-Katayama M."/>
            <person name="Suzuki M."/>
            <person name="Aoki J."/>
            <person name="Arakawa T."/>
            <person name="Iida J."/>
            <person name="Imamura K."/>
            <person name="Itoh M."/>
            <person name="Kato T."/>
            <person name="Kawaji H."/>
            <person name="Kawagashira N."/>
            <person name="Kawashima T."/>
            <person name="Kojima M."/>
            <person name="Kondo S."/>
            <person name="Konno H."/>
            <person name="Nakano K."/>
            <person name="Ninomiya N."/>
            <person name="Nishio T."/>
            <person name="Okada M."/>
            <person name="Plessy C."/>
            <person name="Shibata K."/>
            <person name="Shiraki T."/>
            <person name="Suzuki S."/>
            <person name="Tagami M."/>
            <person name="Waki K."/>
            <person name="Watahiki A."/>
            <person name="Okamura-Oho Y."/>
            <person name="Suzuki H."/>
            <person name="Kawai J."/>
            <person name="Hayashizaki Y."/>
        </authorList>
    </citation>
    <scope>NUCLEOTIDE SEQUENCE [LARGE SCALE MRNA]</scope>
    <source>
        <strain>BALB/cJ</strain>
        <tissue>Blood</tissue>
    </source>
</reference>
<reference evidence="6 7" key="4">
    <citation type="journal article" date="2004" name="Genome Res.">
        <title>The status, quality, and expansion of the NIH full-length cDNA project: the Mammalian Gene Collection (MGC).</title>
        <authorList>
            <consortium name="The MGC Project Team"/>
        </authorList>
    </citation>
    <scope>NUCLEOTIDE SEQUENCE [LARGE SCALE MRNA]</scope>
    <source>
        <strain evidence="7">NMRI</strain>
        <tissue evidence="7">Mammary gland</tissue>
    </source>
</reference>
<reference key="5">
    <citation type="journal article" date="2010" name="Cell">
        <title>A tissue-specific atlas of mouse protein phosphorylation and expression.</title>
        <authorList>
            <person name="Huttlin E.L."/>
            <person name="Jedrychowski M.P."/>
            <person name="Elias J.E."/>
            <person name="Goswami T."/>
            <person name="Rad R."/>
            <person name="Beausoleil S.A."/>
            <person name="Villen J."/>
            <person name="Haas W."/>
            <person name="Sowa M.E."/>
            <person name="Gygi S.P."/>
        </authorList>
    </citation>
    <scope>PHOSPHORYLATION [LARGE SCALE ANALYSIS] AT SER-199</scope>
    <scope>IDENTIFICATION BY MASS SPECTROMETRY [LARGE SCALE ANALYSIS]</scope>
    <source>
        <tissue>Kidney</tissue>
        <tissue>Spleen</tissue>
    </source>
</reference>
<name>RBM45_MOUSE</name>
<proteinExistence type="evidence at protein level"/>
<organism>
    <name type="scientific">Mus musculus</name>
    <name type="common">Mouse</name>
    <dbReference type="NCBI Taxonomy" id="10090"/>
    <lineage>
        <taxon>Eukaryota</taxon>
        <taxon>Metazoa</taxon>
        <taxon>Chordata</taxon>
        <taxon>Craniata</taxon>
        <taxon>Vertebrata</taxon>
        <taxon>Euteleostomi</taxon>
        <taxon>Mammalia</taxon>
        <taxon>Eutheria</taxon>
        <taxon>Euarchontoglires</taxon>
        <taxon>Glires</taxon>
        <taxon>Rodentia</taxon>
        <taxon>Myomorpha</taxon>
        <taxon>Muroidea</taxon>
        <taxon>Muridae</taxon>
        <taxon>Murinae</taxon>
        <taxon>Mus</taxon>
        <taxon>Mus</taxon>
    </lineage>
</organism>
<keyword id="KW-0963">Cytoplasm</keyword>
<keyword id="KW-0217">Developmental protein</keyword>
<keyword id="KW-0221">Differentiation</keyword>
<keyword id="KW-1017">Isopeptide bond</keyword>
<keyword id="KW-0524">Neurogenesis</keyword>
<keyword id="KW-0539">Nucleus</keyword>
<keyword id="KW-0597">Phosphoprotein</keyword>
<keyword id="KW-1185">Reference proteome</keyword>
<keyword id="KW-0677">Repeat</keyword>
<keyword id="KW-0694">RNA-binding</keyword>
<keyword id="KW-0832">Ubl conjugation</keyword>
<comment type="function">
    <text evidence="2 3">RNA-binding protein with binding specificity for poly(C). May play an important role in neural development (By similarity).</text>
</comment>
<comment type="subcellular location">
    <subcellularLocation>
        <location evidence="1">Cytoplasm</location>
    </subcellularLocation>
    <subcellularLocation>
        <location evidence="1">Nucleus</location>
    </subcellularLocation>
    <text evidence="1">Predominantly cytoplasmic. May shuttle between cytoplasm and nucleus.</text>
</comment>
<comment type="sequence caution" evidence="6">
    <conflict type="frameshift">
        <sequence resource="EMBL-CDS" id="BAC41024"/>
    </conflict>
</comment>
<accession>Q8BHN5</accession>
<accession>Q8C1Z5</accession>
<dbReference type="EMBL" id="AB036992">
    <property type="protein sequence ID" value="BAC16208.1"/>
    <property type="molecule type" value="mRNA"/>
</dbReference>
<dbReference type="EMBL" id="AY152391">
    <property type="protein sequence ID" value="AAN41644.1"/>
    <property type="molecule type" value="mRNA"/>
</dbReference>
<dbReference type="EMBL" id="AK089975">
    <property type="protein sequence ID" value="BAC41024.1"/>
    <property type="status" value="ALT_FRAME"/>
    <property type="molecule type" value="mRNA"/>
</dbReference>
<dbReference type="EMBL" id="BC057890">
    <property type="protein sequence ID" value="AAH57890.1"/>
    <property type="molecule type" value="mRNA"/>
</dbReference>
<dbReference type="CCDS" id="CCDS16157.1"/>
<dbReference type="RefSeq" id="NP_700454.1">
    <property type="nucleotide sequence ID" value="NM_153405.2"/>
</dbReference>
<dbReference type="SMR" id="Q8BHN5"/>
<dbReference type="FunCoup" id="Q8BHN5">
    <property type="interactions" value="3975"/>
</dbReference>
<dbReference type="STRING" id="10090.ENSMUSP00000040420"/>
<dbReference type="iPTMnet" id="Q8BHN5"/>
<dbReference type="PhosphoSitePlus" id="Q8BHN5"/>
<dbReference type="PaxDb" id="10090-ENSMUSP00000040420"/>
<dbReference type="PeptideAtlas" id="Q8BHN5"/>
<dbReference type="ProteomicsDB" id="255002"/>
<dbReference type="Pumba" id="Q8BHN5"/>
<dbReference type="Antibodypedia" id="19584">
    <property type="antibodies" value="134 antibodies from 23 providers"/>
</dbReference>
<dbReference type="Ensembl" id="ENSMUST00000046389.5">
    <property type="protein sequence ID" value="ENSMUSP00000040420.5"/>
    <property type="gene ID" value="ENSMUSG00000042369.9"/>
</dbReference>
<dbReference type="GeneID" id="241490"/>
<dbReference type="KEGG" id="mmu:241490"/>
<dbReference type="UCSC" id="uc008kez.1">
    <property type="organism name" value="mouse"/>
</dbReference>
<dbReference type="AGR" id="MGI:2387367"/>
<dbReference type="CTD" id="129831"/>
<dbReference type="MGI" id="MGI:2387367">
    <property type="gene designation" value="Rbm45"/>
</dbReference>
<dbReference type="VEuPathDB" id="HostDB:ENSMUSG00000042369"/>
<dbReference type="eggNOG" id="ENOG502QTJ8">
    <property type="taxonomic scope" value="Eukaryota"/>
</dbReference>
<dbReference type="GeneTree" id="ENSGT00680000100059"/>
<dbReference type="HOGENOM" id="CLU_035274_1_0_1"/>
<dbReference type="InParanoid" id="Q8BHN5"/>
<dbReference type="OMA" id="MIPKTYT"/>
<dbReference type="OrthoDB" id="78437at2759"/>
<dbReference type="PhylomeDB" id="Q8BHN5"/>
<dbReference type="TreeFam" id="TF324216"/>
<dbReference type="BioGRID-ORCS" id="241490">
    <property type="hits" value="3 hits in 79 CRISPR screens"/>
</dbReference>
<dbReference type="ChiTaRS" id="Rbm45">
    <property type="organism name" value="mouse"/>
</dbReference>
<dbReference type="PRO" id="PR:Q8BHN5"/>
<dbReference type="Proteomes" id="UP000000589">
    <property type="component" value="Chromosome 2"/>
</dbReference>
<dbReference type="RNAct" id="Q8BHN5">
    <property type="molecule type" value="protein"/>
</dbReference>
<dbReference type="Bgee" id="ENSMUSG00000042369">
    <property type="expression patterns" value="Expressed in pineal body and 220 other cell types or tissues"/>
</dbReference>
<dbReference type="GO" id="GO:0005737">
    <property type="term" value="C:cytoplasm"/>
    <property type="evidence" value="ECO:0000250"/>
    <property type="project" value="UniProtKB"/>
</dbReference>
<dbReference type="GO" id="GO:0005654">
    <property type="term" value="C:nucleoplasm"/>
    <property type="evidence" value="ECO:0007669"/>
    <property type="project" value="Ensembl"/>
</dbReference>
<dbReference type="GO" id="GO:0005634">
    <property type="term" value="C:nucleus"/>
    <property type="evidence" value="ECO:0000250"/>
    <property type="project" value="UniProtKB"/>
</dbReference>
<dbReference type="GO" id="GO:0003723">
    <property type="term" value="F:RNA binding"/>
    <property type="evidence" value="ECO:0000250"/>
    <property type="project" value="UniProtKB"/>
</dbReference>
<dbReference type="GO" id="GO:0030154">
    <property type="term" value="P:cell differentiation"/>
    <property type="evidence" value="ECO:0007669"/>
    <property type="project" value="UniProtKB-KW"/>
</dbReference>
<dbReference type="GO" id="GO:0007399">
    <property type="term" value="P:nervous system development"/>
    <property type="evidence" value="ECO:0000250"/>
    <property type="project" value="UniProtKB"/>
</dbReference>
<dbReference type="CDD" id="cd12366">
    <property type="entry name" value="RRM1_RBM45"/>
    <property type="match status" value="1"/>
</dbReference>
<dbReference type="CDD" id="cd12367">
    <property type="entry name" value="RRM2_RBM45"/>
    <property type="match status" value="1"/>
</dbReference>
<dbReference type="CDD" id="cd12368">
    <property type="entry name" value="RRM3_RBM45"/>
    <property type="match status" value="1"/>
</dbReference>
<dbReference type="CDD" id="cd12369">
    <property type="entry name" value="RRM4_RBM45"/>
    <property type="match status" value="1"/>
</dbReference>
<dbReference type="FunFam" id="3.30.70.330:FF:000292">
    <property type="entry name" value="RNA-binding motif protein 45"/>
    <property type="match status" value="1"/>
</dbReference>
<dbReference type="FunFam" id="3.30.70.330:FF:000295">
    <property type="entry name" value="RNA-binding motif protein 45"/>
    <property type="match status" value="1"/>
</dbReference>
<dbReference type="FunFam" id="3.30.70.330:FF:000290">
    <property type="entry name" value="RNA-binding protein 45 isoform X1"/>
    <property type="match status" value="1"/>
</dbReference>
<dbReference type="Gene3D" id="3.30.70.330">
    <property type="match status" value="4"/>
</dbReference>
<dbReference type="InterPro" id="IPR012677">
    <property type="entry name" value="Nucleotide-bd_a/b_plait_sf"/>
</dbReference>
<dbReference type="InterPro" id="IPR035979">
    <property type="entry name" value="RBD_domain_sf"/>
</dbReference>
<dbReference type="InterPro" id="IPR034203">
    <property type="entry name" value="RBM45_RRM1"/>
</dbReference>
<dbReference type="InterPro" id="IPR034206">
    <property type="entry name" value="RBM45_RRM2"/>
</dbReference>
<dbReference type="InterPro" id="IPR034207">
    <property type="entry name" value="RBM45_RRM3"/>
</dbReference>
<dbReference type="InterPro" id="IPR034208">
    <property type="entry name" value="RBM45_RRM4"/>
</dbReference>
<dbReference type="InterPro" id="IPR000504">
    <property type="entry name" value="RRM_dom"/>
</dbReference>
<dbReference type="InterPro" id="IPR052462">
    <property type="entry name" value="SLIRP/GR-RBP-like"/>
</dbReference>
<dbReference type="PANTHER" id="PTHR48027">
    <property type="entry name" value="HETEROGENEOUS NUCLEAR RIBONUCLEOPROTEIN 87F-RELATED"/>
    <property type="match status" value="1"/>
</dbReference>
<dbReference type="Pfam" id="PF00076">
    <property type="entry name" value="RRM_1"/>
    <property type="match status" value="4"/>
</dbReference>
<dbReference type="SMART" id="SM00360">
    <property type="entry name" value="RRM"/>
    <property type="match status" value="4"/>
</dbReference>
<dbReference type="SUPFAM" id="SSF54928">
    <property type="entry name" value="RNA-binding domain, RBD"/>
    <property type="match status" value="2"/>
</dbReference>
<dbReference type="PROSITE" id="PS50102">
    <property type="entry name" value="RRM"/>
    <property type="match status" value="3"/>
</dbReference>
<protein>
    <recommendedName>
        <fullName>RNA-binding protein 45</fullName>
    </recommendedName>
    <alternativeName>
        <fullName>Developmentally-regulated RNA-binding protein 1</fullName>
        <shortName>RB-1</shortName>
    </alternativeName>
    <alternativeName>
        <fullName>RNA-binding motif protein 45</fullName>
    </alternativeName>
</protein>
<evidence type="ECO:0000250" key="1"/>
<evidence type="ECO:0000250" key="2">
    <source>
        <dbReference type="UniProtKB" id="Q8CFD1"/>
    </source>
</evidence>
<evidence type="ECO:0000250" key="3">
    <source>
        <dbReference type="UniProtKB" id="Q8IUH3"/>
    </source>
</evidence>
<evidence type="ECO:0000255" key="4">
    <source>
        <dbReference type="PROSITE-ProRule" id="PRU00176"/>
    </source>
</evidence>
<evidence type="ECO:0000256" key="5">
    <source>
        <dbReference type="SAM" id="MobiDB-lite"/>
    </source>
</evidence>
<evidence type="ECO:0000305" key="6"/>
<evidence type="ECO:0000312" key="7">
    <source>
        <dbReference type="EMBL" id="AAH57890.1"/>
    </source>
</evidence>
<evidence type="ECO:0000312" key="8">
    <source>
        <dbReference type="EMBL" id="AAN41644.1"/>
    </source>
</evidence>
<evidence type="ECO:0000312" key="9">
    <source>
        <dbReference type="EMBL" id="BAC16208.1"/>
    </source>
</evidence>
<evidence type="ECO:0007744" key="10">
    <source>
    </source>
</evidence>
<sequence>MDDAGGLGGSGGFRPGVDSLDEPPNSRIFLVISKHTSELVLRERFSPFGDIQDIWVVRDKHTKESKGVAFVKFARSSQACRAMEEMHGQCLGPSDTKPIKVFIAQSRSSGSHRDVEDEELTRIFVMIPKSYTEEDLREKFKVYGDIEYCSIIKNKVTGESKGLGYVRYLKPSQAAQAIENCDRSFRALLAEPKNKVSGSPEQDDYSSGRQEALGQEPRANLFPFVGEQQSEFSTFDKNDSRGQEAVSKRLSVVSRVPFTEEQLFSIFDIVPGLEYCEVPRDPYSNYGHGVVQYFNVASAIYAKYKLHGFQYPPGNRIVVSFLDDGSNMTELIRKMATQMVAAQLASMVWSTTSQQQFLQYGGNAASQAPQIQTDVVLPSCKKKAPPETPVKERLFVVFNPHPLPLDVLEDIFCRFGNLIEVYLVSGKNVGYVKYADRKSANEAITTLHGKILNGVRLKVMLADSPREESKKRQRTY</sequence>